<organism>
    <name type="scientific">Escherichia coli</name>
    <dbReference type="NCBI Taxonomy" id="562"/>
    <lineage>
        <taxon>Bacteria</taxon>
        <taxon>Pseudomonadati</taxon>
        <taxon>Pseudomonadota</taxon>
        <taxon>Gammaproteobacteria</taxon>
        <taxon>Enterobacterales</taxon>
        <taxon>Enterobacteriaceae</taxon>
        <taxon>Escherichia</taxon>
    </lineage>
</organism>
<keyword id="KW-0998">Cell outer membrane</keyword>
<keyword id="KW-0449">Lipoprotein</keyword>
<keyword id="KW-0472">Membrane</keyword>
<keyword id="KW-0564">Palmitate</keyword>
<keyword id="KW-0614">Plasmid</keyword>
<keyword id="KW-0732">Signal</keyword>
<feature type="signal peptide" evidence="1">
    <location>
        <begin position="1"/>
        <end position="19"/>
    </location>
</feature>
<feature type="chain" id="PRO_0000005689" description="Lysis protein for colicin E9">
    <location>
        <begin position="20"/>
        <end position="47"/>
    </location>
</feature>
<feature type="lipid moiety-binding region" description="N-palmitoyl cysteine" evidence="1">
    <location>
        <position position="20"/>
    </location>
</feature>
<feature type="lipid moiety-binding region" description="S-diacylglycerol cysteine" evidence="1">
    <location>
        <position position="20"/>
    </location>
</feature>
<evidence type="ECO:0000255" key="1">
    <source>
        <dbReference type="PROSITE-ProRule" id="PRU00303"/>
    </source>
</evidence>
<evidence type="ECO:0000305" key="2"/>
<comment type="function">
    <text>Lysis proteins are required for both colicin release and partial cell lysis.</text>
</comment>
<comment type="subcellular location">
    <subcellularLocation>
        <location evidence="2">Cell outer membrane</location>
        <topology evidence="1">Lipid-anchor</topology>
    </subcellularLocation>
</comment>
<proteinExistence type="inferred from homology"/>
<protein>
    <recommendedName>
        <fullName>Lysis protein for colicin E9</fullName>
    </recommendedName>
</protein>
<name>LYS9_ECOLX</name>
<reference key="1">
    <citation type="submission" date="1989-12" db="EMBL/GenBank/DDBJ databases">
        <authorList>
            <person name="Lau P.C.K."/>
        </authorList>
    </citation>
    <scope>NUCLEOTIDE SEQUENCE [GENOMIC DNA]</scope>
</reference>
<reference key="2">
    <citation type="journal article" date="1987" name="J. Gen. Microbiol.">
        <title>Nucleotide sequence of the immunity and lysis region of the ColE9-J plasmid.</title>
        <authorList>
            <person name="James R."/>
            <person name="Jarvis M."/>
            <person name="Barker D.F."/>
        </authorList>
    </citation>
    <scope>NUCLEOTIDE SEQUENCE [GENOMIC DNA]</scope>
</reference>
<sequence length="47" mass="4816">MKKITGIILLLLAAIILAACQANYIRDVQGGTVSPSSSAELTGLATQ</sequence>
<accession>P15176</accession>
<geneLocation type="plasmid">
    <name>ColE9-J</name>
</geneLocation>
<dbReference type="EMBL" id="X15858">
    <property type="protein sequence ID" value="CAA33866.1"/>
    <property type="molecule type" value="Genomic_DNA"/>
</dbReference>
<dbReference type="EMBL" id="M16803">
    <property type="protein sequence ID" value="AAA23079.1"/>
    <property type="molecule type" value="Genomic_DNA"/>
</dbReference>
<dbReference type="PIR" id="D32535">
    <property type="entry name" value="D32535"/>
</dbReference>
<dbReference type="RefSeq" id="WP_001426351.1">
    <property type="nucleotide sequence ID" value="NZ_VODF01000060.1"/>
</dbReference>
<dbReference type="RefSeq" id="YP_002533540.1">
    <property type="nucleotide sequence ID" value="NC_011977.1"/>
</dbReference>
<dbReference type="GO" id="GO:0009279">
    <property type="term" value="C:cell outer membrane"/>
    <property type="evidence" value="ECO:0007669"/>
    <property type="project" value="UniProtKB-SubCell"/>
</dbReference>
<dbReference type="GO" id="GO:0019835">
    <property type="term" value="P:cytolysis"/>
    <property type="evidence" value="ECO:0007669"/>
    <property type="project" value="InterPro"/>
</dbReference>
<dbReference type="InterPro" id="IPR003059">
    <property type="entry name" value="Lysis_col"/>
</dbReference>
<dbReference type="Pfam" id="PF02402">
    <property type="entry name" value="Lysis_col"/>
    <property type="match status" value="1"/>
</dbReference>
<dbReference type="PRINTS" id="PR01297">
    <property type="entry name" value="LYSISCOLICIN"/>
</dbReference>
<dbReference type="PROSITE" id="PS51257">
    <property type="entry name" value="PROKAR_LIPOPROTEIN"/>
    <property type="match status" value="1"/>
</dbReference>
<gene>
    <name type="primary">lys</name>
</gene>